<gene>
    <name evidence="1" type="primary">fmt</name>
    <name type="ordered locus">Ssed_0034</name>
</gene>
<dbReference type="EC" id="2.1.2.9" evidence="1"/>
<dbReference type="EMBL" id="CP000821">
    <property type="protein sequence ID" value="ABV34647.1"/>
    <property type="molecule type" value="Genomic_DNA"/>
</dbReference>
<dbReference type="RefSeq" id="WP_012004173.1">
    <property type="nucleotide sequence ID" value="NC_009831.1"/>
</dbReference>
<dbReference type="SMR" id="A8FP74"/>
<dbReference type="STRING" id="425104.Ssed_0034"/>
<dbReference type="KEGG" id="sse:Ssed_0034"/>
<dbReference type="eggNOG" id="COG0223">
    <property type="taxonomic scope" value="Bacteria"/>
</dbReference>
<dbReference type="HOGENOM" id="CLU_033347_1_2_6"/>
<dbReference type="OrthoDB" id="9802815at2"/>
<dbReference type="Proteomes" id="UP000002015">
    <property type="component" value="Chromosome"/>
</dbReference>
<dbReference type="GO" id="GO:0005829">
    <property type="term" value="C:cytosol"/>
    <property type="evidence" value="ECO:0007669"/>
    <property type="project" value="TreeGrafter"/>
</dbReference>
<dbReference type="GO" id="GO:0004479">
    <property type="term" value="F:methionyl-tRNA formyltransferase activity"/>
    <property type="evidence" value="ECO:0007669"/>
    <property type="project" value="UniProtKB-UniRule"/>
</dbReference>
<dbReference type="CDD" id="cd08646">
    <property type="entry name" value="FMT_core_Met-tRNA-FMT_N"/>
    <property type="match status" value="1"/>
</dbReference>
<dbReference type="CDD" id="cd08704">
    <property type="entry name" value="Met_tRNA_FMT_C"/>
    <property type="match status" value="1"/>
</dbReference>
<dbReference type="FunFam" id="3.40.50.12230:FF:000001">
    <property type="entry name" value="Methionyl-tRNA formyltransferase"/>
    <property type="match status" value="1"/>
</dbReference>
<dbReference type="FunFam" id="3.40.50.170:FF:000003">
    <property type="entry name" value="Methionyl-tRNA formyltransferase"/>
    <property type="match status" value="1"/>
</dbReference>
<dbReference type="Gene3D" id="3.10.25.10">
    <property type="entry name" value="Formyl transferase, C-terminal domain"/>
    <property type="match status" value="1"/>
</dbReference>
<dbReference type="Gene3D" id="3.40.50.170">
    <property type="entry name" value="Formyl transferase, N-terminal domain"/>
    <property type="match status" value="1"/>
</dbReference>
<dbReference type="HAMAP" id="MF_00182">
    <property type="entry name" value="Formyl_trans"/>
    <property type="match status" value="1"/>
</dbReference>
<dbReference type="InterPro" id="IPR005794">
    <property type="entry name" value="Fmt"/>
</dbReference>
<dbReference type="InterPro" id="IPR005793">
    <property type="entry name" value="Formyl_trans_C"/>
</dbReference>
<dbReference type="InterPro" id="IPR037022">
    <property type="entry name" value="Formyl_trans_C_sf"/>
</dbReference>
<dbReference type="InterPro" id="IPR002376">
    <property type="entry name" value="Formyl_transf_N"/>
</dbReference>
<dbReference type="InterPro" id="IPR036477">
    <property type="entry name" value="Formyl_transf_N_sf"/>
</dbReference>
<dbReference type="InterPro" id="IPR011034">
    <property type="entry name" value="Formyl_transferase-like_C_sf"/>
</dbReference>
<dbReference type="InterPro" id="IPR001555">
    <property type="entry name" value="GART_AS"/>
</dbReference>
<dbReference type="InterPro" id="IPR044135">
    <property type="entry name" value="Met-tRNA-FMT_C"/>
</dbReference>
<dbReference type="InterPro" id="IPR041711">
    <property type="entry name" value="Met-tRNA-FMT_N"/>
</dbReference>
<dbReference type="NCBIfam" id="TIGR00460">
    <property type="entry name" value="fmt"/>
    <property type="match status" value="1"/>
</dbReference>
<dbReference type="PANTHER" id="PTHR11138">
    <property type="entry name" value="METHIONYL-TRNA FORMYLTRANSFERASE"/>
    <property type="match status" value="1"/>
</dbReference>
<dbReference type="PANTHER" id="PTHR11138:SF5">
    <property type="entry name" value="METHIONYL-TRNA FORMYLTRANSFERASE, MITOCHONDRIAL"/>
    <property type="match status" value="1"/>
</dbReference>
<dbReference type="Pfam" id="PF02911">
    <property type="entry name" value="Formyl_trans_C"/>
    <property type="match status" value="1"/>
</dbReference>
<dbReference type="Pfam" id="PF00551">
    <property type="entry name" value="Formyl_trans_N"/>
    <property type="match status" value="1"/>
</dbReference>
<dbReference type="SUPFAM" id="SSF50486">
    <property type="entry name" value="FMT C-terminal domain-like"/>
    <property type="match status" value="1"/>
</dbReference>
<dbReference type="SUPFAM" id="SSF53328">
    <property type="entry name" value="Formyltransferase"/>
    <property type="match status" value="1"/>
</dbReference>
<dbReference type="PROSITE" id="PS00373">
    <property type="entry name" value="GART"/>
    <property type="match status" value="1"/>
</dbReference>
<organism>
    <name type="scientific">Shewanella sediminis (strain HAW-EB3)</name>
    <dbReference type="NCBI Taxonomy" id="425104"/>
    <lineage>
        <taxon>Bacteria</taxon>
        <taxon>Pseudomonadati</taxon>
        <taxon>Pseudomonadota</taxon>
        <taxon>Gammaproteobacteria</taxon>
        <taxon>Alteromonadales</taxon>
        <taxon>Shewanellaceae</taxon>
        <taxon>Shewanella</taxon>
    </lineage>
</organism>
<feature type="chain" id="PRO_1000077322" description="Methionyl-tRNA formyltransferase">
    <location>
        <begin position="1"/>
        <end position="329"/>
    </location>
</feature>
<feature type="binding site" evidence="1">
    <location>
        <begin position="112"/>
        <end position="115"/>
    </location>
    <ligand>
        <name>(6S)-5,6,7,8-tetrahydrofolate</name>
        <dbReference type="ChEBI" id="CHEBI:57453"/>
    </ligand>
</feature>
<protein>
    <recommendedName>
        <fullName evidence="1">Methionyl-tRNA formyltransferase</fullName>
        <ecNumber evidence="1">2.1.2.9</ecNumber>
    </recommendedName>
</protein>
<comment type="function">
    <text evidence="1">Attaches a formyl group to the free amino group of methionyl-tRNA(fMet). The formyl group appears to play a dual role in the initiator identity of N-formylmethionyl-tRNA by promoting its recognition by IF2 and preventing the misappropriation of this tRNA by the elongation apparatus.</text>
</comment>
<comment type="catalytic activity">
    <reaction evidence="1">
        <text>L-methionyl-tRNA(fMet) + (6R)-10-formyltetrahydrofolate = N-formyl-L-methionyl-tRNA(fMet) + (6S)-5,6,7,8-tetrahydrofolate + H(+)</text>
        <dbReference type="Rhea" id="RHEA:24380"/>
        <dbReference type="Rhea" id="RHEA-COMP:9952"/>
        <dbReference type="Rhea" id="RHEA-COMP:9953"/>
        <dbReference type="ChEBI" id="CHEBI:15378"/>
        <dbReference type="ChEBI" id="CHEBI:57453"/>
        <dbReference type="ChEBI" id="CHEBI:78530"/>
        <dbReference type="ChEBI" id="CHEBI:78844"/>
        <dbReference type="ChEBI" id="CHEBI:195366"/>
        <dbReference type="EC" id="2.1.2.9"/>
    </reaction>
</comment>
<comment type="similarity">
    <text evidence="1">Belongs to the Fmt family.</text>
</comment>
<reference key="1">
    <citation type="submission" date="2007-08" db="EMBL/GenBank/DDBJ databases">
        <title>Complete sequence of Shewanella sediminis HAW-EB3.</title>
        <authorList>
            <consortium name="US DOE Joint Genome Institute"/>
            <person name="Copeland A."/>
            <person name="Lucas S."/>
            <person name="Lapidus A."/>
            <person name="Barry K."/>
            <person name="Glavina del Rio T."/>
            <person name="Dalin E."/>
            <person name="Tice H."/>
            <person name="Pitluck S."/>
            <person name="Chertkov O."/>
            <person name="Brettin T."/>
            <person name="Bruce D."/>
            <person name="Detter J.C."/>
            <person name="Han C."/>
            <person name="Schmutz J."/>
            <person name="Larimer F."/>
            <person name="Land M."/>
            <person name="Hauser L."/>
            <person name="Kyrpides N."/>
            <person name="Kim E."/>
            <person name="Zhao J.-S."/>
            <person name="Richardson P."/>
        </authorList>
    </citation>
    <scope>NUCLEOTIDE SEQUENCE [LARGE SCALE GENOMIC DNA]</scope>
    <source>
        <strain>HAW-EB3</strain>
    </source>
</reference>
<name>FMT_SHESH</name>
<evidence type="ECO:0000255" key="1">
    <source>
        <dbReference type="HAMAP-Rule" id="MF_00182"/>
    </source>
</evidence>
<proteinExistence type="inferred from homology"/>
<sequence length="329" mass="35602">MKPLNIIFAGTPDFAARHLQALIDSEHNIIGVYSQPDRPAGRGKKLQASPVKSLAIEHNLPVFQPKSLRDEQAQAELANLNADIMVVVAYGLILPKVVLDTPKLGCINVHGSILPRWRGAAPIQRALWAGDTETGVTIMQMDIGLDTGDMLLKTRLPIEDNDTSASLYEKLALQGPDALIEALTGLAKGELTAEKQDESLANYAEKLSKEEAELDWSKSALELWREIRAFNPWPISHFTHQDASIKVRESAVSNLSSDAPAGTIISAGKQGIDIATGDGVLTLLNMQLPGKKPLSVGDILNSRGEWFTPGTLLNSKKLIGKEPAVKEAE</sequence>
<accession>A8FP74</accession>
<keyword id="KW-0648">Protein biosynthesis</keyword>
<keyword id="KW-1185">Reference proteome</keyword>
<keyword id="KW-0808">Transferase</keyword>